<reference key="1">
    <citation type="journal article" date="2005" name="Science">
        <title>Genome sequence of the PCE-dechlorinating bacterium Dehalococcoides ethenogenes.</title>
        <authorList>
            <person name="Seshadri R."/>
            <person name="Adrian L."/>
            <person name="Fouts D.E."/>
            <person name="Eisen J.A."/>
            <person name="Phillippy A.M."/>
            <person name="Methe B.A."/>
            <person name="Ward N.L."/>
            <person name="Nelson W.C."/>
            <person name="DeBoy R.T."/>
            <person name="Khouri H.M."/>
            <person name="Kolonay J.F."/>
            <person name="Dodson R.J."/>
            <person name="Daugherty S.C."/>
            <person name="Brinkac L.M."/>
            <person name="Sullivan S.A."/>
            <person name="Madupu R."/>
            <person name="Nelson K.E."/>
            <person name="Kang K.H."/>
            <person name="Impraim M."/>
            <person name="Tran K."/>
            <person name="Robinson J.M."/>
            <person name="Forberger H.A."/>
            <person name="Fraser C.M."/>
            <person name="Zinder S.H."/>
            <person name="Heidelberg J.F."/>
        </authorList>
    </citation>
    <scope>NUCLEOTIDE SEQUENCE [LARGE SCALE GENOMIC DNA]</scope>
    <source>
        <strain>ATCC BAA-2266 / KCTC 15142 / 195</strain>
    </source>
</reference>
<comment type="function">
    <text evidence="1">Specifically dimethylates two adjacent adenosines (A1518 and A1519) in the loop of a conserved hairpin near the 3'-end of 16S rRNA in the 30S particle. May play a critical role in biogenesis of 30S subunits.</text>
</comment>
<comment type="catalytic activity">
    <reaction evidence="1">
        <text>adenosine(1518)/adenosine(1519) in 16S rRNA + 4 S-adenosyl-L-methionine = N(6)-dimethyladenosine(1518)/N(6)-dimethyladenosine(1519) in 16S rRNA + 4 S-adenosyl-L-homocysteine + 4 H(+)</text>
        <dbReference type="Rhea" id="RHEA:19609"/>
        <dbReference type="Rhea" id="RHEA-COMP:10232"/>
        <dbReference type="Rhea" id="RHEA-COMP:10233"/>
        <dbReference type="ChEBI" id="CHEBI:15378"/>
        <dbReference type="ChEBI" id="CHEBI:57856"/>
        <dbReference type="ChEBI" id="CHEBI:59789"/>
        <dbReference type="ChEBI" id="CHEBI:74411"/>
        <dbReference type="ChEBI" id="CHEBI:74493"/>
        <dbReference type="EC" id="2.1.1.182"/>
    </reaction>
</comment>
<comment type="subcellular location">
    <subcellularLocation>
        <location evidence="1">Cytoplasm</location>
    </subcellularLocation>
</comment>
<comment type="similarity">
    <text evidence="1">Belongs to the class I-like SAM-binding methyltransferase superfamily. rRNA adenine N(6)-methyltransferase family. RsmA subfamily.</text>
</comment>
<proteinExistence type="inferred from homology"/>
<name>RSMA_DEHM1</name>
<protein>
    <recommendedName>
        <fullName evidence="1">Ribosomal RNA small subunit methyltransferase A</fullName>
        <ecNumber evidence="1">2.1.1.182</ecNumber>
    </recommendedName>
    <alternativeName>
        <fullName evidence="1">16S rRNA (adenine(1518)-N(6)/adenine(1519)-N(6))-dimethyltransferase</fullName>
    </alternativeName>
    <alternativeName>
        <fullName evidence="1">16S rRNA dimethyladenosine transferase</fullName>
    </alternativeName>
    <alternativeName>
        <fullName evidence="1">16S rRNA dimethylase</fullName>
    </alternativeName>
    <alternativeName>
        <fullName evidence="1">S-adenosylmethionine-6-N', N'-adenosyl(rRNA) dimethyltransferase</fullName>
    </alternativeName>
</protein>
<dbReference type="EC" id="2.1.1.182" evidence="1"/>
<dbReference type="EMBL" id="CP000027">
    <property type="protein sequence ID" value="AAW40289.1"/>
    <property type="molecule type" value="Genomic_DNA"/>
</dbReference>
<dbReference type="RefSeq" id="WP_010936182.1">
    <property type="nucleotide sequence ID" value="NC_002936.3"/>
</dbReference>
<dbReference type="SMR" id="Q3Z9F0"/>
<dbReference type="FunCoup" id="Q3Z9F0">
    <property type="interactions" value="307"/>
</dbReference>
<dbReference type="STRING" id="243164.DET0404"/>
<dbReference type="GeneID" id="3230253"/>
<dbReference type="KEGG" id="det:DET0404"/>
<dbReference type="PATRIC" id="fig|243164.10.peg.383"/>
<dbReference type="eggNOG" id="COG0030">
    <property type="taxonomic scope" value="Bacteria"/>
</dbReference>
<dbReference type="HOGENOM" id="CLU_041220_0_1_0"/>
<dbReference type="InParanoid" id="Q3Z9F0"/>
<dbReference type="Proteomes" id="UP000008289">
    <property type="component" value="Chromosome"/>
</dbReference>
<dbReference type="GO" id="GO:0005829">
    <property type="term" value="C:cytosol"/>
    <property type="evidence" value="ECO:0007669"/>
    <property type="project" value="TreeGrafter"/>
</dbReference>
<dbReference type="GO" id="GO:0052908">
    <property type="term" value="F:16S rRNA (adenine(1518)-N(6)/adenine(1519)-N(6))-dimethyltransferase activity"/>
    <property type="evidence" value="ECO:0007669"/>
    <property type="project" value="UniProtKB-EC"/>
</dbReference>
<dbReference type="GO" id="GO:0003723">
    <property type="term" value="F:RNA binding"/>
    <property type="evidence" value="ECO:0007669"/>
    <property type="project" value="UniProtKB-KW"/>
</dbReference>
<dbReference type="CDD" id="cd02440">
    <property type="entry name" value="AdoMet_MTases"/>
    <property type="match status" value="1"/>
</dbReference>
<dbReference type="Gene3D" id="1.10.8.100">
    <property type="entry name" value="Ribosomal RNA adenine dimethylase-like, domain 2"/>
    <property type="match status" value="1"/>
</dbReference>
<dbReference type="Gene3D" id="3.40.50.150">
    <property type="entry name" value="Vaccinia Virus protein VP39"/>
    <property type="match status" value="1"/>
</dbReference>
<dbReference type="HAMAP" id="MF_00607">
    <property type="entry name" value="16SrRNA_methyltr_A"/>
    <property type="match status" value="1"/>
</dbReference>
<dbReference type="InterPro" id="IPR001737">
    <property type="entry name" value="KsgA/Erm"/>
</dbReference>
<dbReference type="InterPro" id="IPR023165">
    <property type="entry name" value="rRNA_Ade_diMease-like_C"/>
</dbReference>
<dbReference type="InterPro" id="IPR020596">
    <property type="entry name" value="rRNA_Ade_Mease_Trfase_CS"/>
</dbReference>
<dbReference type="InterPro" id="IPR020598">
    <property type="entry name" value="rRNA_Ade_methylase_Trfase_N"/>
</dbReference>
<dbReference type="InterPro" id="IPR011530">
    <property type="entry name" value="rRNA_adenine_dimethylase"/>
</dbReference>
<dbReference type="InterPro" id="IPR029063">
    <property type="entry name" value="SAM-dependent_MTases_sf"/>
</dbReference>
<dbReference type="NCBIfam" id="TIGR00755">
    <property type="entry name" value="ksgA"/>
    <property type="match status" value="1"/>
</dbReference>
<dbReference type="PANTHER" id="PTHR11727">
    <property type="entry name" value="DIMETHYLADENOSINE TRANSFERASE"/>
    <property type="match status" value="1"/>
</dbReference>
<dbReference type="PANTHER" id="PTHR11727:SF7">
    <property type="entry name" value="DIMETHYLADENOSINE TRANSFERASE-RELATED"/>
    <property type="match status" value="1"/>
</dbReference>
<dbReference type="Pfam" id="PF00398">
    <property type="entry name" value="RrnaAD"/>
    <property type="match status" value="1"/>
</dbReference>
<dbReference type="SMART" id="SM00650">
    <property type="entry name" value="rADc"/>
    <property type="match status" value="1"/>
</dbReference>
<dbReference type="SUPFAM" id="SSF53335">
    <property type="entry name" value="S-adenosyl-L-methionine-dependent methyltransferases"/>
    <property type="match status" value="1"/>
</dbReference>
<dbReference type="PROSITE" id="PS01131">
    <property type="entry name" value="RRNA_A_DIMETH"/>
    <property type="match status" value="1"/>
</dbReference>
<dbReference type="PROSITE" id="PS51689">
    <property type="entry name" value="SAM_RNA_A_N6_MT"/>
    <property type="match status" value="1"/>
</dbReference>
<accession>Q3Z9F0</accession>
<feature type="chain" id="PRO_0000257281" description="Ribosomal RNA small subunit methyltransferase A">
    <location>
        <begin position="1"/>
        <end position="291"/>
    </location>
</feature>
<feature type="binding site" evidence="1">
    <location>
        <position position="37"/>
    </location>
    <ligand>
        <name>S-adenosyl-L-methionine</name>
        <dbReference type="ChEBI" id="CHEBI:59789"/>
    </ligand>
</feature>
<feature type="binding site" evidence="1">
    <location>
        <position position="39"/>
    </location>
    <ligand>
        <name>S-adenosyl-L-methionine</name>
        <dbReference type="ChEBI" id="CHEBI:59789"/>
    </ligand>
</feature>
<feature type="binding site" evidence="1">
    <location>
        <position position="64"/>
    </location>
    <ligand>
        <name>S-adenosyl-L-methionine</name>
        <dbReference type="ChEBI" id="CHEBI:59789"/>
    </ligand>
</feature>
<feature type="binding site" evidence="1">
    <location>
        <position position="85"/>
    </location>
    <ligand>
        <name>S-adenosyl-L-methionine</name>
        <dbReference type="ChEBI" id="CHEBI:59789"/>
    </ligand>
</feature>
<feature type="binding site" evidence="1">
    <location>
        <position position="110"/>
    </location>
    <ligand>
        <name>S-adenosyl-L-methionine</name>
        <dbReference type="ChEBI" id="CHEBI:59789"/>
    </ligand>
</feature>
<feature type="binding site" evidence="1">
    <location>
        <position position="131"/>
    </location>
    <ligand>
        <name>S-adenosyl-L-methionine</name>
        <dbReference type="ChEBI" id="CHEBI:59789"/>
    </ligand>
</feature>
<evidence type="ECO:0000255" key="1">
    <source>
        <dbReference type="HAMAP-Rule" id="MF_00607"/>
    </source>
</evidence>
<gene>
    <name evidence="1" type="primary">rsmA</name>
    <name evidence="1" type="synonym">ksgA</name>
    <name type="ordered locus">DET0404</name>
</gene>
<keyword id="KW-0963">Cytoplasm</keyword>
<keyword id="KW-0489">Methyltransferase</keyword>
<keyword id="KW-0694">RNA-binding</keyword>
<keyword id="KW-0698">rRNA processing</keyword>
<keyword id="KW-0949">S-adenosyl-L-methionine</keyword>
<keyword id="KW-0808">Transferase</keyword>
<organism>
    <name type="scientific">Dehalococcoides mccartyi (strain ATCC BAA-2266 / KCTC 15142 / 195)</name>
    <name type="common">Dehalococcoides ethenogenes (strain 195)</name>
    <dbReference type="NCBI Taxonomy" id="243164"/>
    <lineage>
        <taxon>Bacteria</taxon>
        <taxon>Bacillati</taxon>
        <taxon>Chloroflexota</taxon>
        <taxon>Dehalococcoidia</taxon>
        <taxon>Dehalococcoidales</taxon>
        <taxon>Dehalococcoidaceae</taxon>
        <taxon>Dehalococcoides</taxon>
    </lineage>
</organism>
<sequence>MEKDAPLAATGTPSLMAQAKEMMEGYTLRARKGLGQHFLISQGVLNKILLAADLKPTDTVIEVGPGLGVLTEELIKRAGQVIAVELDDKLVTALTEKFKAYPNFRIIHSDILKTSPAEILGQNIPYKLVANLPYYITSAVLRQFLEAEAKPELMVVMVQKEVAKNMVAQTGDMGLLTLSVRFYGNPSLVSVVPGGAFYPPPEVDSAIVKVAIPQAAIMQGVSEADFFKLARAGFGTRRKTLLNALAQGLGVSKQSVLALLNRAGIEPARRAETLSMEEWKMLCLVYTENPC</sequence>